<comment type="function">
    <text evidence="3">Transcription factor which may be involved in developmental processes. Seems to act as repressor of YAB5.</text>
</comment>
<comment type="interaction">
    <interactant intactId="EBI-1100563">
        <id>Q33DK1</id>
    </interactant>
    <interactant intactId="EBI-1100547">
        <id>Q7XM13</id>
        <label>WOX1</label>
    </interactant>
    <organismsDiffer>false</organismsDiffer>
    <experiments>3</experiments>
</comment>
<comment type="subcellular location">
    <subcellularLocation>
        <location evidence="1 3">Nucleus</location>
    </subcellularLocation>
</comment>
<comment type="tissue specificity">
    <text evidence="3">Expressed in leaf primordia, young leaves, floret meristems, floral organ primordia (except carpel primordium), stamens and carpels. Does not show polar expression pattern.</text>
</comment>
<comment type="similarity">
    <text evidence="4">Belongs to the WUS homeobox family.</text>
</comment>
<accession>Q33DK1</accession>
<accession>A0A0P0XY78</accession>
<accession>A0AAS9</accession>
<organism>
    <name type="scientific">Oryza sativa subsp. japonica</name>
    <name type="common">Rice</name>
    <dbReference type="NCBI Taxonomy" id="39947"/>
    <lineage>
        <taxon>Eukaryota</taxon>
        <taxon>Viridiplantae</taxon>
        <taxon>Streptophyta</taxon>
        <taxon>Embryophyta</taxon>
        <taxon>Tracheophyta</taxon>
        <taxon>Spermatophyta</taxon>
        <taxon>Magnoliopsida</taxon>
        <taxon>Liliopsida</taxon>
        <taxon>Poales</taxon>
        <taxon>Poaceae</taxon>
        <taxon>BOP clade</taxon>
        <taxon>Oryzoideae</taxon>
        <taxon>Oryzeae</taxon>
        <taxon>Oryzinae</taxon>
        <taxon>Oryza</taxon>
        <taxon>Oryza sativa</taxon>
    </lineage>
</organism>
<keyword id="KW-0217">Developmental protein</keyword>
<keyword id="KW-0238">DNA-binding</keyword>
<keyword id="KW-0371">Homeobox</keyword>
<keyword id="KW-0539">Nucleus</keyword>
<keyword id="KW-1185">Reference proteome</keyword>
<keyword id="KW-0804">Transcription</keyword>
<keyword id="KW-0805">Transcription regulation</keyword>
<gene>
    <name type="primary">WOX3</name>
    <name type="ordered locus">Os11g0102100</name>
    <name type="ordered locus">LOC_Os11g01130</name>
</gene>
<gene>
    <name type="ordered locus">Os12g0101600</name>
    <name type="ordered locus">LOC_Os12g01120</name>
    <name type="ORF">OsJ_031341</name>
</gene>
<feature type="chain" id="PRO_0000308637" description="WUSCHEL-related homeobox 3">
    <location>
        <begin position="1"/>
        <end position="203"/>
    </location>
</feature>
<feature type="DNA-binding region" description="Homeobox; WUS-type" evidence="1">
    <location>
        <begin position="4"/>
        <end position="68"/>
    </location>
</feature>
<feature type="region of interest" description="Disordered" evidence="2">
    <location>
        <begin position="73"/>
        <end position="95"/>
    </location>
</feature>
<feature type="region of interest" description="Disordered" evidence="2">
    <location>
        <begin position="109"/>
        <end position="135"/>
    </location>
</feature>
<feature type="region of interest" description="Disordered" evidence="2">
    <location>
        <begin position="180"/>
        <end position="203"/>
    </location>
</feature>
<feature type="compositionally biased region" description="Pro residues" evidence="2">
    <location>
        <begin position="80"/>
        <end position="91"/>
    </location>
</feature>
<feature type="compositionally biased region" description="Basic residues" evidence="2">
    <location>
        <begin position="109"/>
        <end position="118"/>
    </location>
</feature>
<feature type="compositionally biased region" description="Low complexity" evidence="2">
    <location>
        <begin position="119"/>
        <end position="135"/>
    </location>
</feature>
<feature type="compositionally biased region" description="Low complexity" evidence="2">
    <location>
        <begin position="190"/>
        <end position="203"/>
    </location>
</feature>
<reference key="1">
    <citation type="journal article" date="2005" name="Genes Genet. Syst.">
        <title>Members of TALE and WUS subfamilies of homeodomain proteins with potentially important functions in development form dimers within each subfamily in rice.</title>
        <authorList>
            <person name="Nagasaki H."/>
            <person name="Matsuoka M."/>
            <person name="Sato Y."/>
        </authorList>
    </citation>
    <scope>NUCLEOTIDE SEQUENCE [MRNA]</scope>
    <source>
        <strain>cv. Taichung 65</strain>
        <tissue>Flower</tissue>
    </source>
</reference>
<reference key="2">
    <citation type="journal article" date="2005" name="BMC Biol.">
        <title>The sequence of rice chromosomes 11 and 12, rich in disease resistance genes and recent gene duplications.</title>
        <authorList>
            <consortium name="The rice chromosomes 11 and 12 sequencing consortia"/>
        </authorList>
    </citation>
    <scope>NUCLEOTIDE SEQUENCE [LARGE SCALE GENOMIC DNA]</scope>
    <source>
        <strain>cv. Nipponbare</strain>
    </source>
</reference>
<reference key="3">
    <citation type="journal article" date="2005" name="Nature">
        <title>The map-based sequence of the rice genome.</title>
        <authorList>
            <consortium name="International rice genome sequencing project (IRGSP)"/>
        </authorList>
    </citation>
    <scope>NUCLEOTIDE SEQUENCE [LARGE SCALE GENOMIC DNA]</scope>
    <source>
        <strain>cv. Nipponbare</strain>
    </source>
</reference>
<reference key="4">
    <citation type="journal article" date="2008" name="Nucleic Acids Res.">
        <title>The rice annotation project database (RAP-DB): 2008 update.</title>
        <authorList>
            <consortium name="The rice annotation project (RAP)"/>
        </authorList>
    </citation>
    <scope>GENOME REANNOTATION</scope>
    <source>
        <strain>cv. Nipponbare</strain>
    </source>
</reference>
<reference key="5">
    <citation type="journal article" date="2013" name="Rice">
        <title>Improvement of the Oryza sativa Nipponbare reference genome using next generation sequence and optical map data.</title>
        <authorList>
            <person name="Kawahara Y."/>
            <person name="de la Bastide M."/>
            <person name="Hamilton J.P."/>
            <person name="Kanamori H."/>
            <person name="McCombie W.R."/>
            <person name="Ouyang S."/>
            <person name="Schwartz D.C."/>
            <person name="Tanaka T."/>
            <person name="Wu J."/>
            <person name="Zhou S."/>
            <person name="Childs K.L."/>
            <person name="Davidson R.M."/>
            <person name="Lin H."/>
            <person name="Quesada-Ocampo L."/>
            <person name="Vaillancourt B."/>
            <person name="Sakai H."/>
            <person name="Lee S.S."/>
            <person name="Kim J."/>
            <person name="Numa H."/>
            <person name="Itoh T."/>
            <person name="Buell C.R."/>
            <person name="Matsumoto T."/>
        </authorList>
    </citation>
    <scope>GENOME REANNOTATION</scope>
    <source>
        <strain>cv. Nipponbare</strain>
    </source>
</reference>
<reference key="6">
    <citation type="journal article" date="2005" name="PLoS Biol.">
        <title>The genomes of Oryza sativa: a history of duplications.</title>
        <authorList>
            <person name="Yu J."/>
            <person name="Wang J."/>
            <person name="Lin W."/>
            <person name="Li S."/>
            <person name="Li H."/>
            <person name="Zhou J."/>
            <person name="Ni P."/>
            <person name="Dong W."/>
            <person name="Hu S."/>
            <person name="Zeng C."/>
            <person name="Zhang J."/>
            <person name="Zhang Y."/>
            <person name="Li R."/>
            <person name="Xu Z."/>
            <person name="Li S."/>
            <person name="Li X."/>
            <person name="Zheng H."/>
            <person name="Cong L."/>
            <person name="Lin L."/>
            <person name="Yin J."/>
            <person name="Geng J."/>
            <person name="Li G."/>
            <person name="Shi J."/>
            <person name="Liu J."/>
            <person name="Lv H."/>
            <person name="Li J."/>
            <person name="Wang J."/>
            <person name="Deng Y."/>
            <person name="Ran L."/>
            <person name="Shi X."/>
            <person name="Wang X."/>
            <person name="Wu Q."/>
            <person name="Li C."/>
            <person name="Ren X."/>
            <person name="Wang J."/>
            <person name="Wang X."/>
            <person name="Li D."/>
            <person name="Liu D."/>
            <person name="Zhang X."/>
            <person name="Ji Z."/>
            <person name="Zhao W."/>
            <person name="Sun Y."/>
            <person name="Zhang Z."/>
            <person name="Bao J."/>
            <person name="Han Y."/>
            <person name="Dong L."/>
            <person name="Ji J."/>
            <person name="Chen P."/>
            <person name="Wu S."/>
            <person name="Liu J."/>
            <person name="Xiao Y."/>
            <person name="Bu D."/>
            <person name="Tan J."/>
            <person name="Yang L."/>
            <person name="Ye C."/>
            <person name="Zhang J."/>
            <person name="Xu J."/>
            <person name="Zhou Y."/>
            <person name="Yu Y."/>
            <person name="Zhang B."/>
            <person name="Zhuang S."/>
            <person name="Wei H."/>
            <person name="Liu B."/>
            <person name="Lei M."/>
            <person name="Yu H."/>
            <person name="Li Y."/>
            <person name="Xu H."/>
            <person name="Wei S."/>
            <person name="He X."/>
            <person name="Fang L."/>
            <person name="Zhang Z."/>
            <person name="Zhang Y."/>
            <person name="Huang X."/>
            <person name="Su Z."/>
            <person name="Tong W."/>
            <person name="Li J."/>
            <person name="Tong Z."/>
            <person name="Li S."/>
            <person name="Ye J."/>
            <person name="Wang L."/>
            <person name="Fang L."/>
            <person name="Lei T."/>
            <person name="Chen C.-S."/>
            <person name="Chen H.-C."/>
            <person name="Xu Z."/>
            <person name="Li H."/>
            <person name="Huang H."/>
            <person name="Zhang F."/>
            <person name="Xu H."/>
            <person name="Li N."/>
            <person name="Zhao C."/>
            <person name="Li S."/>
            <person name="Dong L."/>
            <person name="Huang Y."/>
            <person name="Li L."/>
            <person name="Xi Y."/>
            <person name="Qi Q."/>
            <person name="Li W."/>
            <person name="Zhang B."/>
            <person name="Hu W."/>
            <person name="Zhang Y."/>
            <person name="Tian X."/>
            <person name="Jiao Y."/>
            <person name="Liang X."/>
            <person name="Jin J."/>
            <person name="Gao L."/>
            <person name="Zheng W."/>
            <person name="Hao B."/>
            <person name="Liu S.-M."/>
            <person name="Wang W."/>
            <person name="Yuan L."/>
            <person name="Cao M."/>
            <person name="McDermott J."/>
            <person name="Samudrala R."/>
            <person name="Wang J."/>
            <person name="Wong G.K.-S."/>
            <person name="Yang H."/>
        </authorList>
    </citation>
    <scope>NUCLEOTIDE SEQUENCE [LARGE SCALE GENOMIC DNA]</scope>
    <source>
        <strain>cv. Nipponbare</strain>
    </source>
</reference>
<reference key="7">
    <citation type="journal article" date="2006" name="Mol. Biol. Evol.">
        <title>The shoot stem cell niche in angiosperms: expression patterns of WUS orthologues in rice and maize imply major modifications in the course of mono- and dicot evolution.</title>
        <authorList>
            <person name="Nardmann J."/>
            <person name="Werr W."/>
        </authorList>
    </citation>
    <scope>NUCLEOTIDE SEQUENCE [MRNA] OF 4-68</scope>
</reference>
<reference key="8">
    <citation type="journal article" date="2007" name="Plant Physiol.">
        <title>A WUSCHEL-LIKE HOMEOBOX gene represses a YABBY gene expression required for rice leaf development.</title>
        <authorList>
            <person name="Dai M."/>
            <person name="Hu Y."/>
            <person name="Zhao Y."/>
            <person name="Liu H."/>
            <person name="Zhou D.-X."/>
        </authorList>
    </citation>
    <scope>FUNCTION</scope>
    <scope>SUBCELLULAR LOCATION</scope>
    <scope>TISSUE SPECIFICITY</scope>
    <scope>NOMENCLATURE</scope>
</reference>
<sequence>MPQTPSTRWCPTPEQLMILEEMYRSGVRTPNAAEIQQITAHLAYYGRIEGKNVFYWFQNHKARERQRLRRRLCARHQQQPSPPSSTVPPAPTAAAAGAVVQVHPAVMQLHHHHHHHHPYAAAAAAQSHHLQQQQQQQAEWPAAVDYCSTASASASATAADMAIPPCCRPLKTLELFPTKSTSGGLKEDCCSSSKSSSCSTSTN</sequence>
<evidence type="ECO:0000255" key="1">
    <source>
        <dbReference type="PROSITE-ProRule" id="PRU00108"/>
    </source>
</evidence>
<evidence type="ECO:0000256" key="2">
    <source>
        <dbReference type="SAM" id="MobiDB-lite"/>
    </source>
</evidence>
<evidence type="ECO:0000269" key="3">
    <source>
    </source>
</evidence>
<evidence type="ECO:0000305" key="4"/>
<proteinExistence type="evidence at protein level"/>
<protein>
    <recommendedName>
        <fullName>WUSCHEL-related homeobox 3</fullName>
    </recommendedName>
    <alternativeName>
        <fullName>OsNS</fullName>
    </alternativeName>
    <alternativeName>
        <fullName>OsWOX3</fullName>
    </alternativeName>
</protein>
<dbReference type="EMBL" id="AB218893">
    <property type="protein sequence ID" value="BAE48302.1"/>
    <property type="molecule type" value="mRNA"/>
</dbReference>
<dbReference type="EMBL" id="DP000010">
    <property type="protein sequence ID" value="ABA91096.1"/>
    <property type="molecule type" value="Genomic_DNA"/>
</dbReference>
<dbReference type="EMBL" id="DP000011">
    <property type="protein sequence ID" value="ABA95570.1"/>
    <property type="molecule type" value="Genomic_DNA"/>
</dbReference>
<dbReference type="EMBL" id="AP008217">
    <property type="status" value="NOT_ANNOTATED_CDS"/>
    <property type="molecule type" value="Genomic_DNA"/>
</dbReference>
<dbReference type="EMBL" id="AP008218">
    <property type="status" value="NOT_ANNOTATED_CDS"/>
    <property type="molecule type" value="Genomic_DNA"/>
</dbReference>
<dbReference type="EMBL" id="AP014967">
    <property type="protein sequence ID" value="BAT12270.1"/>
    <property type="molecule type" value="Genomic_DNA"/>
</dbReference>
<dbReference type="EMBL" id="AP014968">
    <property type="protein sequence ID" value="BAT15447.1"/>
    <property type="molecule type" value="Genomic_DNA"/>
</dbReference>
<dbReference type="EMBL" id="CM000148">
    <property type="protein sequence ID" value="EAZ17132.1"/>
    <property type="molecule type" value="Genomic_DNA"/>
</dbReference>
<dbReference type="EMBL" id="AM234748">
    <property type="protein sequence ID" value="CAJ84140.1"/>
    <property type="molecule type" value="mRNA"/>
</dbReference>
<dbReference type="SMR" id="Q33DK1"/>
<dbReference type="FunCoup" id="Q33DK1">
    <property type="interactions" value="37"/>
</dbReference>
<dbReference type="IntAct" id="Q33DK1">
    <property type="interactions" value="1"/>
</dbReference>
<dbReference type="STRING" id="39947.Q33DK1"/>
<dbReference type="PaxDb" id="39947-Q33DK1"/>
<dbReference type="EnsemblPlants" id="Os11t0102100-02">
    <property type="protein sequence ID" value="Os11t0102100-02"/>
    <property type="gene ID" value="Os11g0102100"/>
</dbReference>
<dbReference type="EnsemblPlants" id="Os12t0101600-02">
    <property type="protein sequence ID" value="Os12t0101600-02"/>
    <property type="gene ID" value="Os12g0101600"/>
</dbReference>
<dbReference type="Gramene" id="Os11t0102100-02">
    <property type="protein sequence ID" value="Os11t0102100-02"/>
    <property type="gene ID" value="Os11g0102100"/>
</dbReference>
<dbReference type="Gramene" id="Os12t0101600-02">
    <property type="protein sequence ID" value="Os12t0101600-02"/>
    <property type="gene ID" value="Os12g0101600"/>
</dbReference>
<dbReference type="KEGG" id="osa:107275468"/>
<dbReference type="KEGG" id="osa:107276476"/>
<dbReference type="eggNOG" id="ENOG502S13K">
    <property type="taxonomic scope" value="Eukaryota"/>
</dbReference>
<dbReference type="HOGENOM" id="CLU_070454_1_0_1"/>
<dbReference type="InParanoid" id="Q33DK1"/>
<dbReference type="OrthoDB" id="1932526at2759"/>
<dbReference type="BRENDA" id="1.14.13.79">
    <property type="organism ID" value="8948"/>
</dbReference>
<dbReference type="BRENDA" id="1.14.14.107">
    <property type="organism ID" value="8948"/>
</dbReference>
<dbReference type="Proteomes" id="UP000000763">
    <property type="component" value="Chromosome 11"/>
</dbReference>
<dbReference type="Proteomes" id="UP000000763">
    <property type="component" value="Chromosome 12"/>
</dbReference>
<dbReference type="Proteomes" id="UP000007752">
    <property type="component" value="Chromosome 11"/>
</dbReference>
<dbReference type="Proteomes" id="UP000059680">
    <property type="component" value="Chromosome 11"/>
</dbReference>
<dbReference type="Proteomes" id="UP000059680">
    <property type="component" value="Chromosome 12"/>
</dbReference>
<dbReference type="GO" id="GO:0005634">
    <property type="term" value="C:nucleus"/>
    <property type="evidence" value="ECO:0007669"/>
    <property type="project" value="UniProtKB-SubCell"/>
</dbReference>
<dbReference type="GO" id="GO:0003677">
    <property type="term" value="F:DNA binding"/>
    <property type="evidence" value="ECO:0007669"/>
    <property type="project" value="UniProtKB-KW"/>
</dbReference>
<dbReference type="GO" id="GO:0003700">
    <property type="term" value="F:DNA-binding transcription factor activity"/>
    <property type="evidence" value="ECO:0007669"/>
    <property type="project" value="InterPro"/>
</dbReference>
<dbReference type="GO" id="GO:0099402">
    <property type="term" value="P:plant organ development"/>
    <property type="evidence" value="ECO:0007669"/>
    <property type="project" value="InterPro"/>
</dbReference>
<dbReference type="CDD" id="cd00086">
    <property type="entry name" value="homeodomain"/>
    <property type="match status" value="1"/>
</dbReference>
<dbReference type="FunFam" id="1.10.10.60:FF:000146">
    <property type="entry name" value="WUSCHEL-related homeobox 4"/>
    <property type="match status" value="1"/>
</dbReference>
<dbReference type="Gene3D" id="1.10.10.60">
    <property type="entry name" value="Homeodomain-like"/>
    <property type="match status" value="1"/>
</dbReference>
<dbReference type="InterPro" id="IPR001356">
    <property type="entry name" value="HD"/>
</dbReference>
<dbReference type="InterPro" id="IPR009057">
    <property type="entry name" value="Homeodomain-like_sf"/>
</dbReference>
<dbReference type="InterPro" id="IPR044555">
    <property type="entry name" value="WUSCHEL-like"/>
</dbReference>
<dbReference type="PANTHER" id="PTHR45940">
    <property type="entry name" value="WUSCHEL-RELATED HOMEOBOX 1-RELATED"/>
    <property type="match status" value="1"/>
</dbReference>
<dbReference type="PANTHER" id="PTHR45940:SF42">
    <property type="entry name" value="WUSCHEL-RELATED HOMEOBOX 3"/>
    <property type="match status" value="1"/>
</dbReference>
<dbReference type="Pfam" id="PF00046">
    <property type="entry name" value="Homeodomain"/>
    <property type="match status" value="1"/>
</dbReference>
<dbReference type="SMART" id="SM00389">
    <property type="entry name" value="HOX"/>
    <property type="match status" value="1"/>
</dbReference>
<dbReference type="SUPFAM" id="SSF46689">
    <property type="entry name" value="Homeodomain-like"/>
    <property type="match status" value="1"/>
</dbReference>
<dbReference type="PROSITE" id="PS50071">
    <property type="entry name" value="HOMEOBOX_2"/>
    <property type="match status" value="1"/>
</dbReference>
<name>WOX3_ORYSJ</name>